<dbReference type="EC" id="3.1.1.26" evidence="8 9 10 13"/>
<dbReference type="EC" id="3.1.1.3" evidence="8 9 10 11 15 16 18"/>
<dbReference type="EMBL" id="M93284">
    <property type="protein sequence ID" value="AAA59533.1"/>
    <property type="molecule type" value="mRNA"/>
</dbReference>
<dbReference type="EMBL" id="AK291492">
    <property type="protein sequence ID" value="BAF84181.1"/>
    <property type="molecule type" value="mRNA"/>
</dbReference>
<dbReference type="EMBL" id="CR456949">
    <property type="protein sequence ID" value="CAG33230.1"/>
    <property type="molecule type" value="mRNA"/>
</dbReference>
<dbReference type="EMBL" id="AC016825">
    <property type="status" value="NOT_ANNOTATED_CDS"/>
    <property type="molecule type" value="Genomic_DNA"/>
</dbReference>
<dbReference type="EMBL" id="FO082044">
    <property type="status" value="NOT_ANNOTATED_CDS"/>
    <property type="molecule type" value="Genomic_DNA"/>
</dbReference>
<dbReference type="EMBL" id="CH471066">
    <property type="protein sequence ID" value="EAW49448.1"/>
    <property type="molecule type" value="Genomic_DNA"/>
</dbReference>
<dbReference type="EMBL" id="BC005989">
    <property type="protein sequence ID" value="AAH05989.1"/>
    <property type="molecule type" value="mRNA"/>
</dbReference>
<dbReference type="PIR" id="B43357">
    <property type="entry name" value="B43357"/>
</dbReference>
<dbReference type="RefSeq" id="NP_005387.2">
    <property type="nucleotide sequence ID" value="NM_005396.4"/>
</dbReference>
<dbReference type="PDB" id="2OXE">
    <property type="method" value="X-ray"/>
    <property type="resolution" value="2.80 A"/>
    <property type="chains" value="A/B=18-469"/>
</dbReference>
<dbReference type="PDB" id="2PVS">
    <property type="method" value="X-ray"/>
    <property type="resolution" value="3.00 A"/>
    <property type="chains" value="A/B=18-469"/>
</dbReference>
<dbReference type="PDBsum" id="2OXE"/>
<dbReference type="PDBsum" id="2PVS"/>
<dbReference type="SMR" id="P54317"/>
<dbReference type="BioGRID" id="111409">
    <property type="interactions" value="14"/>
</dbReference>
<dbReference type="FunCoup" id="P54317">
    <property type="interactions" value="108"/>
</dbReference>
<dbReference type="IntAct" id="P54317">
    <property type="interactions" value="10"/>
</dbReference>
<dbReference type="ChEMBL" id="CHEMBL2169728"/>
<dbReference type="DrugBank" id="DB02613">
    <property type="generic name" value="Capric dimethyl amine oxide"/>
</dbReference>
<dbReference type="SwissLipids" id="SLP:000001434"/>
<dbReference type="ESTHER" id="human-PNLIPRP2">
    <property type="family name" value="Pancreatic_lipase"/>
</dbReference>
<dbReference type="GlyCosmos" id="P54317">
    <property type="glycosylation" value="2 sites, No reported glycans"/>
</dbReference>
<dbReference type="GlyGen" id="P54317">
    <property type="glycosylation" value="2 sites"/>
</dbReference>
<dbReference type="iPTMnet" id="P54317"/>
<dbReference type="PhosphoSitePlus" id="P54317"/>
<dbReference type="BioMuta" id="PNLIPRP2"/>
<dbReference type="DMDM" id="1708840"/>
<dbReference type="MassIVE" id="P54317"/>
<dbReference type="PeptideAtlas" id="P54317"/>
<dbReference type="ProteomicsDB" id="56684"/>
<dbReference type="Antibodypedia" id="73327">
    <property type="antibodies" value="85 antibodies from 17 providers"/>
</dbReference>
<dbReference type="DNASU" id="5408"/>
<dbReference type="GeneID" id="5408"/>
<dbReference type="KEGG" id="hsa:5408"/>
<dbReference type="UCSC" id="uc057wes.1">
    <property type="organism name" value="human"/>
</dbReference>
<dbReference type="AGR" id="HGNC:9157"/>
<dbReference type="CTD" id="5408"/>
<dbReference type="DisGeNET" id="5408"/>
<dbReference type="GeneCards" id="PNLIPRP2"/>
<dbReference type="HGNC" id="HGNC:9157">
    <property type="gene designation" value="PNLIPRP2"/>
</dbReference>
<dbReference type="MIM" id="604423">
    <property type="type" value="gene"/>
</dbReference>
<dbReference type="neXtProt" id="NX_P54317"/>
<dbReference type="PharmGKB" id="PA33480"/>
<dbReference type="VEuPathDB" id="HostDB:ENSG00000266200"/>
<dbReference type="InParanoid" id="P54317"/>
<dbReference type="OMA" id="CYRPLGC"/>
<dbReference type="OrthoDB" id="199913at2759"/>
<dbReference type="PAN-GO" id="P54317">
    <property type="GO annotations" value="5 GO annotations based on evolutionary models"/>
</dbReference>
<dbReference type="PhylomeDB" id="P54317"/>
<dbReference type="BRENDA" id="3.1.1.26">
    <property type="organism ID" value="2681"/>
</dbReference>
<dbReference type="PathwayCommons" id="P54317"/>
<dbReference type="Reactome" id="R-HSA-192456">
    <property type="pathway name" value="Digestion of dietary lipid"/>
</dbReference>
<dbReference type="Reactome" id="R-HSA-9925561">
    <property type="pathway name" value="Developmental Lineage of Pancreatic Acinar Cells"/>
</dbReference>
<dbReference type="SignaLink" id="P54317"/>
<dbReference type="UniPathway" id="UPA00256"/>
<dbReference type="BioGRID-ORCS" id="5408">
    <property type="hits" value="8 hits in 311 CRISPR screens"/>
</dbReference>
<dbReference type="ChiTaRS" id="PNLIPRP2">
    <property type="organism name" value="human"/>
</dbReference>
<dbReference type="EvolutionaryTrace" id="P54317"/>
<dbReference type="GenomeRNAi" id="5408"/>
<dbReference type="Pharos" id="P54317">
    <property type="development level" value="Tbio"/>
</dbReference>
<dbReference type="PRO" id="PR:P54317"/>
<dbReference type="Proteomes" id="UP000005640">
    <property type="component" value="Chromosome 10"/>
</dbReference>
<dbReference type="RNAct" id="P54317">
    <property type="molecule type" value="protein"/>
</dbReference>
<dbReference type="Bgee" id="ENSG00000266200">
    <property type="expression patterns" value="Expressed in body of pancreas and 95 other cell types or tissues"/>
</dbReference>
<dbReference type="ExpressionAtlas" id="P54317">
    <property type="expression patterns" value="baseline and differential"/>
</dbReference>
<dbReference type="GO" id="GO:0005576">
    <property type="term" value="C:extracellular region"/>
    <property type="evidence" value="ECO:0000304"/>
    <property type="project" value="Reactome"/>
</dbReference>
<dbReference type="GO" id="GO:0005615">
    <property type="term" value="C:extracellular space"/>
    <property type="evidence" value="ECO:0000314"/>
    <property type="project" value="UniProtKB"/>
</dbReference>
<dbReference type="GO" id="GO:0043005">
    <property type="term" value="C:neuron projection"/>
    <property type="evidence" value="ECO:0000250"/>
    <property type="project" value="UniProtKB"/>
</dbReference>
<dbReference type="GO" id="GO:0042589">
    <property type="term" value="C:zymogen granule membrane"/>
    <property type="evidence" value="ECO:0007669"/>
    <property type="project" value="UniProtKB-SubCell"/>
</dbReference>
<dbReference type="GO" id="GO:0005509">
    <property type="term" value="F:calcium ion binding"/>
    <property type="evidence" value="ECO:0000314"/>
    <property type="project" value="UniProtKB"/>
</dbReference>
<dbReference type="GO" id="GO:0047714">
    <property type="term" value="F:galactolipase activity"/>
    <property type="evidence" value="ECO:0000314"/>
    <property type="project" value="UniProtKB"/>
</dbReference>
<dbReference type="GO" id="GO:0004465">
    <property type="term" value="F:lipoprotein lipase activity"/>
    <property type="evidence" value="ECO:0000318"/>
    <property type="project" value="GO_Central"/>
</dbReference>
<dbReference type="GO" id="GO:0047372">
    <property type="term" value="F:monoacylglycerol lipase activity"/>
    <property type="evidence" value="ECO:0000314"/>
    <property type="project" value="UniProtKB"/>
</dbReference>
<dbReference type="GO" id="GO:0008970">
    <property type="term" value="F:phospholipase A1 activity"/>
    <property type="evidence" value="ECO:0000318"/>
    <property type="project" value="GO_Central"/>
</dbReference>
<dbReference type="GO" id="GO:0004620">
    <property type="term" value="F:phospholipase activity"/>
    <property type="evidence" value="ECO:0000314"/>
    <property type="project" value="UniProtKB"/>
</dbReference>
<dbReference type="GO" id="GO:0004806">
    <property type="term" value="F:triacylglycerol lipase activity"/>
    <property type="evidence" value="ECO:0000314"/>
    <property type="project" value="UniProtKB"/>
</dbReference>
<dbReference type="GO" id="GO:0042632">
    <property type="term" value="P:cholesterol homeostasis"/>
    <property type="evidence" value="ECO:0000318"/>
    <property type="project" value="GO_Central"/>
</dbReference>
<dbReference type="GO" id="GO:0006633">
    <property type="term" value="P:fatty acid biosynthetic process"/>
    <property type="evidence" value="ECO:0000318"/>
    <property type="project" value="GO_Central"/>
</dbReference>
<dbReference type="GO" id="GO:0019376">
    <property type="term" value="P:galactolipid catabolic process"/>
    <property type="evidence" value="ECO:0000314"/>
    <property type="project" value="UniProtKB"/>
</dbReference>
<dbReference type="GO" id="GO:0034375">
    <property type="term" value="P:high-density lipoprotein particle remodeling"/>
    <property type="evidence" value="ECO:0000318"/>
    <property type="project" value="GO_Central"/>
</dbReference>
<dbReference type="GO" id="GO:0044241">
    <property type="term" value="P:lipid digestion"/>
    <property type="evidence" value="ECO:0000304"/>
    <property type="project" value="Reactome"/>
</dbReference>
<dbReference type="GO" id="GO:0034638">
    <property type="term" value="P:phosphatidylcholine catabolic process"/>
    <property type="evidence" value="ECO:0000314"/>
    <property type="project" value="UniProtKB"/>
</dbReference>
<dbReference type="GO" id="GO:0009395">
    <property type="term" value="P:phospholipid catabolic process"/>
    <property type="evidence" value="ECO:0000314"/>
    <property type="project" value="UniProtKB"/>
</dbReference>
<dbReference type="GO" id="GO:0019433">
    <property type="term" value="P:triglyceride catabolic process"/>
    <property type="evidence" value="ECO:0000314"/>
    <property type="project" value="UniProtKB"/>
</dbReference>
<dbReference type="GO" id="GO:0006641">
    <property type="term" value="P:triglyceride metabolic process"/>
    <property type="evidence" value="ECO:0000304"/>
    <property type="project" value="ProtInc"/>
</dbReference>
<dbReference type="CDD" id="cd00707">
    <property type="entry name" value="Pancreat_lipase_like"/>
    <property type="match status" value="1"/>
</dbReference>
<dbReference type="CDD" id="cd01759">
    <property type="entry name" value="PLAT_PL"/>
    <property type="match status" value="1"/>
</dbReference>
<dbReference type="FunFam" id="3.40.50.1820:FF:000033">
    <property type="entry name" value="Pancreatic triacylglycerol lipase"/>
    <property type="match status" value="1"/>
</dbReference>
<dbReference type="FunFam" id="2.60.60.20:FF:000003">
    <property type="entry name" value="Triacylglycerol lipase"/>
    <property type="match status" value="1"/>
</dbReference>
<dbReference type="Gene3D" id="3.40.50.1820">
    <property type="entry name" value="alpha/beta hydrolase"/>
    <property type="match status" value="1"/>
</dbReference>
<dbReference type="Gene3D" id="2.60.60.20">
    <property type="entry name" value="PLAT/LH2 domain"/>
    <property type="match status" value="1"/>
</dbReference>
<dbReference type="InterPro" id="IPR029058">
    <property type="entry name" value="AB_hydrolase_fold"/>
</dbReference>
<dbReference type="InterPro" id="IPR013818">
    <property type="entry name" value="Lipase"/>
</dbReference>
<dbReference type="InterPro" id="IPR016272">
    <property type="entry name" value="Lipase_LIPH"/>
</dbReference>
<dbReference type="InterPro" id="IPR033906">
    <property type="entry name" value="Lipase_N"/>
</dbReference>
<dbReference type="InterPro" id="IPR002331">
    <property type="entry name" value="Lipase_panc"/>
</dbReference>
<dbReference type="InterPro" id="IPR001024">
    <property type="entry name" value="PLAT/LH2_dom"/>
</dbReference>
<dbReference type="InterPro" id="IPR036392">
    <property type="entry name" value="PLAT/LH2_dom_sf"/>
</dbReference>
<dbReference type="InterPro" id="IPR000734">
    <property type="entry name" value="TAG_lipase"/>
</dbReference>
<dbReference type="PANTHER" id="PTHR11610">
    <property type="entry name" value="LIPASE"/>
    <property type="match status" value="1"/>
</dbReference>
<dbReference type="PANTHER" id="PTHR11610:SF165">
    <property type="entry name" value="PANCREATIC LIPASE-RELATED PROTEIN 2"/>
    <property type="match status" value="1"/>
</dbReference>
<dbReference type="Pfam" id="PF00151">
    <property type="entry name" value="Lipase"/>
    <property type="match status" value="1"/>
</dbReference>
<dbReference type="Pfam" id="PF01477">
    <property type="entry name" value="PLAT"/>
    <property type="match status" value="1"/>
</dbReference>
<dbReference type="PIRSF" id="PIRSF000865">
    <property type="entry name" value="Lipoprotein_lipase_LIPH"/>
    <property type="match status" value="1"/>
</dbReference>
<dbReference type="PRINTS" id="PR00823">
    <property type="entry name" value="PANCLIPASE"/>
</dbReference>
<dbReference type="PRINTS" id="PR00821">
    <property type="entry name" value="TAGLIPASE"/>
</dbReference>
<dbReference type="SMART" id="SM00308">
    <property type="entry name" value="LH2"/>
    <property type="match status" value="1"/>
</dbReference>
<dbReference type="SUPFAM" id="SSF53474">
    <property type="entry name" value="alpha/beta-Hydrolases"/>
    <property type="match status" value="1"/>
</dbReference>
<dbReference type="SUPFAM" id="SSF49723">
    <property type="entry name" value="Lipase/lipooxygenase domain (PLAT/LH2 domain)"/>
    <property type="match status" value="1"/>
</dbReference>
<dbReference type="PROSITE" id="PS00120">
    <property type="entry name" value="LIPASE_SER"/>
    <property type="match status" value="1"/>
</dbReference>
<dbReference type="PROSITE" id="PS50095">
    <property type="entry name" value="PLAT"/>
    <property type="match status" value="1"/>
</dbReference>
<accession>P54317</accession>
<accession>A0A075B781</accession>
<accession>A8K627</accession>
<accession>Q6IB55</accession>
<organism>
    <name type="scientific">Homo sapiens</name>
    <name type="common">Human</name>
    <dbReference type="NCBI Taxonomy" id="9606"/>
    <lineage>
        <taxon>Eukaryota</taxon>
        <taxon>Metazoa</taxon>
        <taxon>Chordata</taxon>
        <taxon>Craniata</taxon>
        <taxon>Vertebrata</taxon>
        <taxon>Euteleostomi</taxon>
        <taxon>Mammalia</taxon>
        <taxon>Eutheria</taxon>
        <taxon>Euarchontoglires</taxon>
        <taxon>Primates</taxon>
        <taxon>Haplorrhini</taxon>
        <taxon>Catarrhini</taxon>
        <taxon>Hominidae</taxon>
        <taxon>Homo</taxon>
    </lineage>
</organism>
<feature type="signal peptide" evidence="3">
    <location>
        <begin position="1"/>
        <end position="17"/>
    </location>
</feature>
<feature type="chain" id="PRO_0000017793" description="Pancreatic lipase-related protein 2">
    <location>
        <begin position="18"/>
        <end position="469"/>
    </location>
</feature>
<feature type="domain" description="PLAT" evidence="4">
    <location>
        <begin position="357"/>
        <end position="469"/>
    </location>
</feature>
<feature type="region of interest" description="Required for galactolipase activity" evidence="18">
    <location>
        <begin position="93"/>
        <end position="105"/>
    </location>
</feature>
<feature type="region of interest" description="Required for galactolipase activity" evidence="18">
    <location>
        <begin position="257"/>
        <end position="279"/>
    </location>
</feature>
<feature type="active site" description="Nucleophile" evidence="10">
    <location>
        <position position="171"/>
    </location>
</feature>
<feature type="active site" description="Charge relay system" evidence="5 10">
    <location>
        <position position="195"/>
    </location>
</feature>
<feature type="active site" description="Charge relay system" evidence="5 10">
    <location>
        <position position="282"/>
    </location>
</feature>
<feature type="binding site" evidence="10 32 33">
    <location>
        <position position="206"/>
    </location>
    <ligand>
        <name>Ca(2+)</name>
        <dbReference type="ChEBI" id="CHEBI:29108"/>
    </ligand>
</feature>
<feature type="binding site" evidence="10 32 33">
    <location>
        <position position="209"/>
    </location>
    <ligand>
        <name>Ca(2+)</name>
        <dbReference type="ChEBI" id="CHEBI:29108"/>
    </ligand>
</feature>
<feature type="binding site" evidence="10 32 33">
    <location>
        <position position="211"/>
    </location>
    <ligand>
        <name>Ca(2+)</name>
        <dbReference type="ChEBI" id="CHEBI:29108"/>
    </ligand>
</feature>
<feature type="binding site" evidence="10 32 33">
    <location>
        <position position="214"/>
    </location>
    <ligand>
        <name>Ca(2+)</name>
        <dbReference type="ChEBI" id="CHEBI:29108"/>
    </ligand>
</feature>
<feature type="glycosylation site" description="N-linked (GlcNAc...) asparagine" evidence="10 32">
    <location>
        <position position="353"/>
    </location>
</feature>
<feature type="glycosylation site" description="N-linked (GlcNAc...) asparagine" evidence="3">
    <location>
        <position position="428"/>
    </location>
</feature>
<feature type="disulfide bond" evidence="4 10">
    <location>
        <begin position="21"/>
        <end position="27"/>
    </location>
</feature>
<feature type="disulfide bond" evidence="4 10">
    <location>
        <begin position="109"/>
        <end position="120"/>
    </location>
</feature>
<feature type="disulfide bond" evidence="4 10">
    <location>
        <begin position="256"/>
        <end position="280"/>
    </location>
</feature>
<feature type="disulfide bond" evidence="4 10">
    <location>
        <begin position="304"/>
        <end position="315"/>
    </location>
</feature>
<feature type="disulfide bond" evidence="4 10">
    <location>
        <begin position="318"/>
        <end position="323"/>
    </location>
</feature>
<feature type="disulfide bond" evidence="4 10">
    <location>
        <begin position="453"/>
        <end position="469"/>
    </location>
</feature>
<feature type="sequence variant" id="VAR_083661" description="Common variant; more frequent in populations that rely primarily on cereals as the main dietary component; expected to result in near complete absence of the protein and loss of function; if expressed is weakly secreted, mostly intracellularly retained and degraded; dbSNP:rs4751995." evidence="14 15 19">
    <location>
        <begin position="357"/>
        <end position="469"/>
    </location>
</feature>
<feature type="sequence variant" id="VAR_080185" description="In dbSNP:rs4751996." evidence="7">
    <original>I</original>
    <variation>V</variation>
    <location>
        <position position="361"/>
    </location>
</feature>
<feature type="mutagenesis site" description="Loss of N-glycosylation." evidence="10">
    <original>N</original>
    <variation>Q</variation>
    <location>
        <position position="353"/>
    </location>
</feature>
<feature type="sequence conflict" description="In Ref. 2; BAF84181." evidence="21" ref="2">
    <original>K</original>
    <variation>R</variation>
    <location>
        <position position="239"/>
    </location>
</feature>
<feature type="sequence conflict" description="In Ref. 2; BAF84181." evidence="21" ref="2">
    <original>G</original>
    <variation>V</variation>
    <location>
        <position position="352"/>
    </location>
</feature>
<feature type="strand" evidence="34">
    <location>
        <begin position="19"/>
        <end position="21"/>
    </location>
</feature>
<feature type="helix" evidence="34">
    <location>
        <begin position="23"/>
        <end position="25"/>
    </location>
</feature>
<feature type="strand" evidence="34">
    <location>
        <begin position="27"/>
        <end position="29"/>
    </location>
</feature>
<feature type="turn" evidence="34">
    <location>
        <begin position="32"/>
        <end position="34"/>
    </location>
</feature>
<feature type="strand" evidence="34">
    <location>
        <begin position="35"/>
        <end position="37"/>
    </location>
</feature>
<feature type="helix" evidence="34">
    <location>
        <begin position="49"/>
        <end position="52"/>
    </location>
</feature>
<feature type="strand" evidence="34">
    <location>
        <begin position="55"/>
        <end position="59"/>
    </location>
</feature>
<feature type="strand" evidence="34">
    <location>
        <begin position="61"/>
        <end position="66"/>
    </location>
</feature>
<feature type="strand" evidence="34">
    <location>
        <begin position="68"/>
        <end position="70"/>
    </location>
</feature>
<feature type="strand" evidence="34">
    <location>
        <begin position="72"/>
        <end position="74"/>
    </location>
</feature>
<feature type="helix" evidence="34">
    <location>
        <begin position="76"/>
        <end position="80"/>
    </location>
</feature>
<feature type="strand" evidence="34">
    <location>
        <begin position="87"/>
        <end position="93"/>
    </location>
</feature>
<feature type="helix" evidence="34">
    <location>
        <begin position="104"/>
        <end position="112"/>
    </location>
</feature>
<feature type="turn" evidence="34">
    <location>
        <begin position="113"/>
        <end position="115"/>
    </location>
</feature>
<feature type="strand" evidence="34">
    <location>
        <begin position="118"/>
        <end position="124"/>
    </location>
</feature>
<feature type="helix" evidence="34">
    <location>
        <begin position="126"/>
        <end position="129"/>
    </location>
</feature>
<feature type="helix" evidence="34">
    <location>
        <begin position="133"/>
        <end position="158"/>
    </location>
</feature>
<feature type="helix" evidence="34">
    <location>
        <begin position="162"/>
        <end position="164"/>
    </location>
</feature>
<feature type="strand" evidence="34">
    <location>
        <begin position="165"/>
        <end position="170"/>
    </location>
</feature>
<feature type="helix" evidence="34">
    <location>
        <begin position="173"/>
        <end position="183"/>
    </location>
</feature>
<feature type="turn" evidence="34">
    <location>
        <begin position="184"/>
        <end position="186"/>
    </location>
</feature>
<feature type="strand" evidence="34">
    <location>
        <begin position="188"/>
        <end position="195"/>
    </location>
</feature>
<feature type="turn" evidence="34">
    <location>
        <begin position="199"/>
        <end position="203"/>
    </location>
</feature>
<feature type="turn" evidence="34">
    <location>
        <begin position="206"/>
        <end position="208"/>
    </location>
</feature>
<feature type="helix" evidence="34">
    <location>
        <begin position="212"/>
        <end position="214"/>
    </location>
</feature>
<feature type="strand" evidence="34">
    <location>
        <begin position="215"/>
        <end position="221"/>
    </location>
</feature>
<feature type="strand" evidence="34">
    <location>
        <begin position="223"/>
        <end position="226"/>
    </location>
</feature>
<feature type="strand" evidence="34">
    <location>
        <begin position="228"/>
        <end position="230"/>
    </location>
</feature>
<feature type="strand" evidence="34">
    <location>
        <begin position="234"/>
        <end position="236"/>
    </location>
</feature>
<feature type="strand" evidence="34">
    <location>
        <begin position="241"/>
        <end position="247"/>
    </location>
</feature>
<feature type="turn" evidence="34">
    <location>
        <begin position="248"/>
        <end position="251"/>
    </location>
</feature>
<feature type="helix" evidence="34">
    <location>
        <begin position="276"/>
        <end position="278"/>
    </location>
</feature>
<feature type="helix" evidence="34">
    <location>
        <begin position="280"/>
        <end position="294"/>
    </location>
</feature>
<feature type="strand" evidence="34">
    <location>
        <begin position="298"/>
        <end position="300"/>
    </location>
</feature>
<feature type="helix" evidence="34">
    <location>
        <begin position="307"/>
        <end position="311"/>
    </location>
</feature>
<feature type="turn" evidence="35">
    <location>
        <begin position="312"/>
        <end position="315"/>
    </location>
</feature>
<feature type="strand" evidence="35">
    <location>
        <begin position="325"/>
        <end position="327"/>
    </location>
</feature>
<feature type="helix" evidence="34">
    <location>
        <begin position="330"/>
        <end position="332"/>
    </location>
</feature>
<feature type="turn" evidence="34">
    <location>
        <begin position="334"/>
        <end position="337"/>
    </location>
</feature>
<feature type="strand" evidence="34">
    <location>
        <begin position="338"/>
        <end position="346"/>
    </location>
</feature>
<feature type="strand" evidence="34">
    <location>
        <begin position="357"/>
        <end position="369"/>
    </location>
</feature>
<feature type="strand" evidence="34">
    <location>
        <begin position="371"/>
        <end position="380"/>
    </location>
</feature>
<feature type="strand" evidence="34">
    <location>
        <begin position="385"/>
        <end position="396"/>
    </location>
</feature>
<feature type="strand" evidence="34">
    <location>
        <begin position="401"/>
        <end position="410"/>
    </location>
</feature>
<feature type="strand" evidence="34">
    <location>
        <begin position="417"/>
        <end position="423"/>
    </location>
</feature>
<feature type="strand" evidence="34">
    <location>
        <begin position="434"/>
        <end position="443"/>
    </location>
</feature>
<feature type="turn" evidence="34">
    <location>
        <begin position="444"/>
        <end position="446"/>
    </location>
</feature>
<feature type="strand" evidence="34">
    <location>
        <begin position="449"/>
        <end position="453"/>
    </location>
</feature>
<feature type="strand" evidence="34">
    <location>
        <begin position="464"/>
        <end position="468"/>
    </location>
</feature>
<evidence type="ECO:0000250" key="1">
    <source>
        <dbReference type="UniProtKB" id="P17892"/>
    </source>
</evidence>
<evidence type="ECO:0000250" key="2">
    <source>
        <dbReference type="UniProtKB" id="P54318"/>
    </source>
</evidence>
<evidence type="ECO:0000255" key="3"/>
<evidence type="ECO:0000255" key="4">
    <source>
        <dbReference type="PROSITE-ProRule" id="PRU00152"/>
    </source>
</evidence>
<evidence type="ECO:0000255" key="5">
    <source>
        <dbReference type="PROSITE-ProRule" id="PRU10037"/>
    </source>
</evidence>
<evidence type="ECO:0000269" key="6">
    <source>
    </source>
</evidence>
<evidence type="ECO:0000269" key="7">
    <source>
    </source>
</evidence>
<evidence type="ECO:0000269" key="8">
    <source>
    </source>
</evidence>
<evidence type="ECO:0000269" key="9">
    <source>
    </source>
</evidence>
<evidence type="ECO:0000269" key="10">
    <source>
    </source>
</evidence>
<evidence type="ECO:0000269" key="11">
    <source>
    </source>
</evidence>
<evidence type="ECO:0000269" key="12">
    <source>
    </source>
</evidence>
<evidence type="ECO:0000269" key="13">
    <source>
    </source>
</evidence>
<evidence type="ECO:0000269" key="14">
    <source>
    </source>
</evidence>
<evidence type="ECO:0000269" key="15">
    <source>
    </source>
</evidence>
<evidence type="ECO:0000269" key="16">
    <source>
    </source>
</evidence>
<evidence type="ECO:0000269" key="17">
    <source>
    </source>
</evidence>
<evidence type="ECO:0000269" key="18">
    <source>
    </source>
</evidence>
<evidence type="ECO:0000269" key="19">
    <source>
    </source>
</evidence>
<evidence type="ECO:0000303" key="20">
    <source>
    </source>
</evidence>
<evidence type="ECO:0000305" key="21"/>
<evidence type="ECO:0000305" key="22">
    <source>
    </source>
</evidence>
<evidence type="ECO:0000305" key="23">
    <source>
    </source>
</evidence>
<evidence type="ECO:0000305" key="24">
    <source>
    </source>
</evidence>
<evidence type="ECO:0000305" key="25">
    <source>
    </source>
</evidence>
<evidence type="ECO:0000305" key="26">
    <source>
    </source>
</evidence>
<evidence type="ECO:0000305" key="27">
    <source>
    </source>
</evidence>
<evidence type="ECO:0000305" key="28">
    <source>
    </source>
</evidence>
<evidence type="ECO:0000305" key="29">
    <source>
    </source>
</evidence>
<evidence type="ECO:0000305" key="30">
    <source>
    </source>
</evidence>
<evidence type="ECO:0000312" key="31">
    <source>
        <dbReference type="HGNC" id="HGNC:9157"/>
    </source>
</evidence>
<evidence type="ECO:0007744" key="32">
    <source>
        <dbReference type="PDB" id="2OXE"/>
    </source>
</evidence>
<evidence type="ECO:0007744" key="33">
    <source>
        <dbReference type="PDB" id="2PVS"/>
    </source>
</evidence>
<evidence type="ECO:0007829" key="34">
    <source>
        <dbReference type="PDB" id="2OXE"/>
    </source>
</evidence>
<evidence type="ECO:0007829" key="35">
    <source>
        <dbReference type="PDB" id="2PVS"/>
    </source>
</evidence>
<comment type="function">
    <text evidence="1 2 8 9 10 11 12 13 15 16 17 18">Lipase that primarily hydrolyzes triglycerides and galactosylglycerides (PubMed:15287741, PubMed:17401110, PubMed:18702514, PubMed:19451396, PubMed:20083229, PubMed:21865348, PubMed:26494624). In neonates, may play a major role in pancreatic digestion of dietary fats such as milk fat globules enriched in long-chain triglycerides (PubMed:19824014, PubMed:21652702, PubMed:23732775). Hydrolyzes short-, medium- and long-chain fatty acyls in triglycerides without apparent positional specificity (PubMed:15287741, PubMed:17401110, PubMed:18702514, PubMed:21652702, PubMed:21865348). Can completely deacylate triacylglycerols (PubMed:21865348). When the liver matures and bile salt synthesis increases, likely functions mainly as a galactolipase and monoacylglycerol lipase. Hydrolyzes monogalactosyldiglycerols (MGDG) and digalactosyldiacylglycerols (DGDG) present in a plant-based diet, releasing long-chain polyunsaturated fatty acids (PubMed:15287741, PubMed:17401110, PubMed:18702514, PubMed:20083229, PubMed:26494624). Hydrolyzes medium- and long-chain fatty acyls in galactolipids (PubMed:18702514, PubMed:20083229). May act together with LIPF to hydrolyze partially digested triglycerides (PubMed:23732775). Hydrolyzes long-chain monoglycerides with high efficiency (PubMed:17401110, PubMed:21652702, PubMed:23732775). In cytotoxic T cells, contributes to perforin-dependent cell lysis, but is unlikely to mediate direct cytotoxicity (By similarity). Also has low phospholipase activity (PubMed:17401110, PubMed:18702514). In neurons, required for the localization of the phospholipid 1-oleoyl-2-palmitoyl-PC (OPPC) to neurite tips through acyl chain remodeling of membrane phospholipids (By similarity). The resulting OPPC-rich lipid membrane domain recruits the t-SNARE protein STX4 by selectively interacting with the STX4 transmembrane domain and this promotes surface expression of the dopamine transporter SLC6A3/DAT at neurite tips by facilitating fusion of SLC6A3-containing transport vesicles with the plasma membrane (By similarity).</text>
</comment>
<comment type="catalytic activity">
    <reaction evidence="8 9 10 11 15 16 18">
        <text>a triacylglycerol + H2O = a diacylglycerol + a fatty acid + H(+)</text>
        <dbReference type="Rhea" id="RHEA:12044"/>
        <dbReference type="ChEBI" id="CHEBI:15377"/>
        <dbReference type="ChEBI" id="CHEBI:15378"/>
        <dbReference type="ChEBI" id="CHEBI:17855"/>
        <dbReference type="ChEBI" id="CHEBI:18035"/>
        <dbReference type="ChEBI" id="CHEBI:28868"/>
        <dbReference type="EC" id="3.1.1.3"/>
    </reaction>
    <physiologicalReaction direction="left-to-right" evidence="23 24 25 26 28 29 30">
        <dbReference type="Rhea" id="RHEA:12045"/>
    </physiologicalReaction>
</comment>
<comment type="catalytic activity">
    <reaction evidence="8 9 10 13">
        <text>a 1,2-diacyl-3-O-(beta-D-galactosyl)-sn-glycerol + 2 H2O = 3-beta-D-galactosyl-sn-glycerol + 2 a fatty acid + 2 H(+)</text>
        <dbReference type="Rhea" id="RHEA:13189"/>
        <dbReference type="ChEBI" id="CHEBI:15377"/>
        <dbReference type="ChEBI" id="CHEBI:15378"/>
        <dbReference type="ChEBI" id="CHEBI:15754"/>
        <dbReference type="ChEBI" id="CHEBI:17615"/>
        <dbReference type="ChEBI" id="CHEBI:28868"/>
        <dbReference type="EC" id="3.1.1.26"/>
    </reaction>
    <physiologicalReaction direction="left-to-right" evidence="23 24 25 27">
        <dbReference type="Rhea" id="RHEA:13190"/>
    </physiologicalReaction>
</comment>
<comment type="catalytic activity">
    <reaction evidence="10 11 15 16 18">
        <text>1,2,3-tri-(9Z-octadecenoyl)-glycerol + H2O = di-(9Z)-octadecenoylglycerol + (9Z)-octadecenoate + H(+)</text>
        <dbReference type="Rhea" id="RHEA:38575"/>
        <dbReference type="ChEBI" id="CHEBI:15377"/>
        <dbReference type="ChEBI" id="CHEBI:15378"/>
        <dbReference type="ChEBI" id="CHEBI:30823"/>
        <dbReference type="ChEBI" id="CHEBI:53753"/>
        <dbReference type="ChEBI" id="CHEBI:75945"/>
    </reaction>
    <physiologicalReaction direction="left-to-right" evidence="25 26 28 29 30">
        <dbReference type="Rhea" id="RHEA:38576"/>
    </physiologicalReaction>
</comment>
<comment type="catalytic activity">
    <reaction evidence="16">
        <text>di-(9Z)-octadecenoylglycerol + H2O = (9Z-octadecenoyl)-glycerol + (9Z)-octadecenoate + H(+)</text>
        <dbReference type="Rhea" id="RHEA:47868"/>
        <dbReference type="ChEBI" id="CHEBI:15377"/>
        <dbReference type="ChEBI" id="CHEBI:15378"/>
        <dbReference type="ChEBI" id="CHEBI:30823"/>
        <dbReference type="ChEBI" id="CHEBI:75937"/>
        <dbReference type="ChEBI" id="CHEBI:75945"/>
    </reaction>
    <physiologicalReaction direction="left-to-right" evidence="29">
        <dbReference type="Rhea" id="RHEA:47869"/>
    </physiologicalReaction>
</comment>
<comment type="catalytic activity">
    <reaction evidence="10 16">
        <text>(9Z-octadecenoyl)-glycerol + H2O = glycerol + (9Z)-octadecenoate + H(+)</text>
        <dbReference type="Rhea" id="RHEA:39955"/>
        <dbReference type="ChEBI" id="CHEBI:15377"/>
        <dbReference type="ChEBI" id="CHEBI:15378"/>
        <dbReference type="ChEBI" id="CHEBI:17754"/>
        <dbReference type="ChEBI" id="CHEBI:30823"/>
        <dbReference type="ChEBI" id="CHEBI:75937"/>
    </reaction>
    <physiologicalReaction direction="left-to-right" evidence="25 29">
        <dbReference type="Rhea" id="RHEA:39956"/>
    </physiologicalReaction>
</comment>
<comment type="catalytic activity">
    <reaction evidence="9 10">
        <text>1-(9Z-octadecenoyl)-glycerol + H2O = glycerol + (9Z)-octadecenoate + H(+)</text>
        <dbReference type="Rhea" id="RHEA:38487"/>
        <dbReference type="ChEBI" id="CHEBI:15377"/>
        <dbReference type="ChEBI" id="CHEBI:15378"/>
        <dbReference type="ChEBI" id="CHEBI:17754"/>
        <dbReference type="ChEBI" id="CHEBI:30823"/>
        <dbReference type="ChEBI" id="CHEBI:75342"/>
    </reaction>
    <physiologicalReaction direction="left-to-right" evidence="24 25">
        <dbReference type="Rhea" id="RHEA:38488"/>
    </physiologicalReaction>
</comment>
<comment type="catalytic activity">
    <reaction evidence="10">
        <text>1,2,3-tripropanoylglycerol + H2O = dipropanoylglycerol + propanoate + H(+)</text>
        <dbReference type="Rhea" id="RHEA:48024"/>
        <dbReference type="ChEBI" id="CHEBI:15377"/>
        <dbReference type="ChEBI" id="CHEBI:15378"/>
        <dbReference type="ChEBI" id="CHEBI:17272"/>
        <dbReference type="ChEBI" id="CHEBI:88153"/>
        <dbReference type="ChEBI" id="CHEBI:88155"/>
    </reaction>
    <physiologicalReaction direction="left-to-right" evidence="25">
        <dbReference type="Rhea" id="RHEA:48025"/>
    </physiologicalReaction>
</comment>
<comment type="catalytic activity">
    <reaction evidence="8 9 10 15 18">
        <text>1,2,3-tributanoylglycerol + H2O = dibutanoylglycerol + butanoate + H(+)</text>
        <dbReference type="Rhea" id="RHEA:40475"/>
        <dbReference type="ChEBI" id="CHEBI:15377"/>
        <dbReference type="ChEBI" id="CHEBI:15378"/>
        <dbReference type="ChEBI" id="CHEBI:17968"/>
        <dbReference type="ChEBI" id="CHEBI:35020"/>
        <dbReference type="ChEBI" id="CHEBI:76478"/>
    </reaction>
    <physiologicalReaction direction="left-to-right" evidence="23 24 25 28 30">
        <dbReference type="Rhea" id="RHEA:40476"/>
    </physiologicalReaction>
</comment>
<comment type="catalytic activity">
    <reaction evidence="8 9 10 15 18">
        <text>1,2,3-trioctanoylglycerol + H2O = dioctanoylglycerol + octanoate + H(+)</text>
        <dbReference type="Rhea" id="RHEA:47864"/>
        <dbReference type="ChEBI" id="CHEBI:15377"/>
        <dbReference type="ChEBI" id="CHEBI:15378"/>
        <dbReference type="ChEBI" id="CHEBI:25646"/>
        <dbReference type="ChEBI" id="CHEBI:76978"/>
        <dbReference type="ChEBI" id="CHEBI:88066"/>
    </reaction>
    <physiologicalReaction direction="left-to-right" evidence="23 24 25 28 30">
        <dbReference type="Rhea" id="RHEA:47865"/>
    </physiologicalReaction>
</comment>
<comment type="catalytic activity">
    <reaction evidence="8">
        <text>1,2-didecanoylglycerol + H2O = decanoylglycerol + decanoate + H(+)</text>
        <dbReference type="Rhea" id="RHEA:48596"/>
        <dbReference type="ChEBI" id="CHEBI:11152"/>
        <dbReference type="ChEBI" id="CHEBI:15377"/>
        <dbReference type="ChEBI" id="CHEBI:15378"/>
        <dbReference type="ChEBI" id="CHEBI:27689"/>
        <dbReference type="ChEBI" id="CHEBI:90605"/>
    </reaction>
    <physiologicalReaction direction="left-to-right" evidence="23">
        <dbReference type="Rhea" id="RHEA:48597"/>
    </physiologicalReaction>
</comment>
<comment type="catalytic activity">
    <reaction evidence="25">
        <text>long chain 1,2-diacyl-3-O-beta-D-galactosyl-sn-glycerol + H2O = long chain acyl-3-O-beta-D-galactosyl-sn-glycerol + a fatty acid + H(+)</text>
        <dbReference type="Rhea" id="RHEA:48700"/>
        <dbReference type="ChEBI" id="CHEBI:15377"/>
        <dbReference type="ChEBI" id="CHEBI:15378"/>
        <dbReference type="ChEBI" id="CHEBI:28868"/>
        <dbReference type="ChEBI" id="CHEBI:90477"/>
        <dbReference type="ChEBI" id="CHEBI:90770"/>
    </reaction>
    <physiologicalReaction direction="left-to-right" evidence="25">
        <dbReference type="Rhea" id="RHEA:48701"/>
    </physiologicalReaction>
</comment>
<comment type="catalytic activity">
    <reaction evidence="13">
        <text>1,2-dioctanoyl-3-O-beta-D-galactosyl-sn-glycerol + H2O = octanoyl-3-(beta-D-galactosyl)-sn-glycerol + octanoate + H(+)</text>
        <dbReference type="Rhea" id="RHEA:48696"/>
        <dbReference type="ChEBI" id="CHEBI:15377"/>
        <dbReference type="ChEBI" id="CHEBI:15378"/>
        <dbReference type="ChEBI" id="CHEBI:25646"/>
        <dbReference type="ChEBI" id="CHEBI:90453"/>
        <dbReference type="ChEBI" id="CHEBI:90769"/>
    </reaction>
    <physiologicalReaction direction="left-to-right" evidence="27">
        <dbReference type="Rhea" id="RHEA:48697"/>
    </physiologicalReaction>
</comment>
<comment type="catalytic activity">
    <reaction evidence="8 9 10">
        <text>1,2-didodecanoyl-3-beta-D-galactosyl-sn-glycerol + H2O = dodecanoyl-3-beta-D-galactosyl-sn-glycerol + dodecanoate + H(+)</text>
        <dbReference type="Rhea" id="RHEA:48540"/>
        <dbReference type="ChEBI" id="CHEBI:15377"/>
        <dbReference type="ChEBI" id="CHEBI:15378"/>
        <dbReference type="ChEBI" id="CHEBI:18262"/>
        <dbReference type="ChEBI" id="CHEBI:90340"/>
        <dbReference type="ChEBI" id="CHEBI:90515"/>
    </reaction>
    <physiologicalReaction direction="left-to-right" evidence="23 24 25">
        <dbReference type="Rhea" id="RHEA:48541"/>
    </physiologicalReaction>
</comment>
<comment type="catalytic activity">
    <reaction evidence="9">
        <text>1-beta-D-galactosyl-2,3-didodecanoyl-sn-glycerol + H2O = 1-beta-D-galactosyl-dodecanoyl-sn-glycerol + dodecanoate + H(+)</text>
        <dbReference type="Rhea" id="RHEA:48536"/>
        <dbReference type="ChEBI" id="CHEBI:15377"/>
        <dbReference type="ChEBI" id="CHEBI:15378"/>
        <dbReference type="ChEBI" id="CHEBI:18262"/>
        <dbReference type="ChEBI" id="CHEBI:90342"/>
        <dbReference type="ChEBI" id="CHEBI:90514"/>
    </reaction>
    <physiologicalReaction direction="left-to-right" evidence="24">
        <dbReference type="Rhea" id="RHEA:48537"/>
    </physiologicalReaction>
</comment>
<comment type="catalytic activity">
    <reaction evidence="18">
        <text>a 1,2-diacyl-3-O-[alpha-D-galactosyl-(1-&gt;6)-beta-D-galactosyl]-sn-glycerol + H2O = acyl-3-O-[alpha-D-galactosyl-(1-&gt;6)-beta-D-galactosyl]-sn-glycerol + a fatty acid + H(+)</text>
        <dbReference type="Rhea" id="RHEA:48372"/>
        <dbReference type="ChEBI" id="CHEBI:15377"/>
        <dbReference type="ChEBI" id="CHEBI:15378"/>
        <dbReference type="ChEBI" id="CHEBI:28396"/>
        <dbReference type="ChEBI" id="CHEBI:28868"/>
        <dbReference type="ChEBI" id="CHEBI:90310"/>
    </reaction>
    <physiologicalReaction direction="left-to-right" evidence="30">
        <dbReference type="Rhea" id="RHEA:48373"/>
    </physiologicalReaction>
</comment>
<comment type="catalytic activity">
    <reaction evidence="13">
        <text>long chain 1,2-diacyl-3-O-[alpha-D-galactosyl-(1-&gt;6)-beta-D-galactosyl]-sn-glycerol + H2O = long chain acyl-3-O-[alpha-D-galactosyl-(1-&gt;6)-beta-D-galactosyl]-sn-glycerol + a fatty acid + H(+)</text>
        <dbReference type="Rhea" id="RHEA:48708"/>
        <dbReference type="ChEBI" id="CHEBI:15377"/>
        <dbReference type="ChEBI" id="CHEBI:15378"/>
        <dbReference type="ChEBI" id="CHEBI:28868"/>
        <dbReference type="ChEBI" id="CHEBI:90463"/>
        <dbReference type="ChEBI" id="CHEBI:90774"/>
    </reaction>
    <physiologicalReaction direction="left-to-right" evidence="27">
        <dbReference type="Rhea" id="RHEA:48709"/>
    </physiologicalReaction>
</comment>
<comment type="catalytic activity">
    <reaction evidence="13">
        <text>1,2-dioctanoyl-3-O-[alpha-D-galactosyl-(1-&gt;6)-beta-D-galactosyl]-sn-glycerol + H2O = octanoyl-3-O-[alpha-D-galactosyl-(1-&gt;6)-beta-D-galactosyl]-sn-glycerol + octanoate + H(+)</text>
        <dbReference type="Rhea" id="RHEA:48692"/>
        <dbReference type="ChEBI" id="CHEBI:15377"/>
        <dbReference type="ChEBI" id="CHEBI:15378"/>
        <dbReference type="ChEBI" id="CHEBI:25646"/>
        <dbReference type="ChEBI" id="CHEBI:90457"/>
        <dbReference type="ChEBI" id="CHEBI:90768"/>
    </reaction>
    <physiologicalReaction direction="left-to-right" evidence="27">
        <dbReference type="Rhea" id="RHEA:48693"/>
    </physiologicalReaction>
</comment>
<comment type="catalytic activity">
    <reaction evidence="9 10">
        <text>1,2-didodecanoyl-3-O-[alpha-D-galactosyl-(1-&gt;6)-beta-D-galactosyl]-sn-glycerol + H2O = dodecanoyl-3-O-[alpha-D-galactosyl-(1-&gt;6)-beta-D-galactosyl]-sn-glycerol + dodecanoate + H(+)</text>
        <dbReference type="Rhea" id="RHEA:48516"/>
        <dbReference type="ChEBI" id="CHEBI:15377"/>
        <dbReference type="ChEBI" id="CHEBI:15378"/>
        <dbReference type="ChEBI" id="CHEBI:18262"/>
        <dbReference type="ChEBI" id="CHEBI:90337"/>
        <dbReference type="ChEBI" id="CHEBI:90359"/>
    </reaction>
    <physiologicalReaction direction="left-to-right" evidence="24 25">
        <dbReference type="Rhea" id="RHEA:48517"/>
    </physiologicalReaction>
</comment>
<comment type="catalytic activity">
    <reaction evidence="9 10">
        <text>a 1,2-diacyl-sn-glycero-3-phosphocholine + H2O = a monoacyl-sn-glycero-3-phosphocholine + a fatty acid + H(+)</text>
        <dbReference type="Rhea" id="RHEA:44664"/>
        <dbReference type="ChEBI" id="CHEBI:15377"/>
        <dbReference type="ChEBI" id="CHEBI:15378"/>
        <dbReference type="ChEBI" id="CHEBI:28868"/>
        <dbReference type="ChEBI" id="CHEBI:57643"/>
        <dbReference type="ChEBI" id="CHEBI:84465"/>
    </reaction>
    <physiologicalReaction direction="left-to-right" evidence="24 25">
        <dbReference type="Rhea" id="RHEA:44665"/>
    </physiologicalReaction>
</comment>
<comment type="activity regulation">
    <text evidence="8 9 13 15 17 18">Regulated by CLPS and bile salts levels ranging 1-5 mM in neonates and 2-30 mM in healthy adults. CLPS stimulates milk fat digestion in the presence of 4 mM bile salts (PubMed:23732775). Triacylglycerol lipase activity toward short- and medium-chain triglycerides is inhibited by increasing concentrations of bile salts and weakly reactivated by CLPS (PubMed:15287741, PubMed:17401110, PubMed:21652702, PubMed:26494624). Optimal triacylglycerol lipase activity is reached at bile salts concentrations ranging from 0.1 to 0.5 mM and then decreases at concentrations higher than 1 mM (PubMed:15287741, PubMed:17401110, PubMed:21652702). Lipase activity toward long-chain glycerolipids is stimulated by CLPS in the presence of 4 mM bile salts (PubMed:21652702). Galactolipase activity is inhibited at high concentrations of bile salts (PubMed:20083229). Triacylglycerol lipase activity is inhibited by anti-obesity drug tetrahydrolipstatin (PubMed:17401110).</text>
</comment>
<comment type="biophysicochemical properties">
    <phDependence>
        <text evidence="9">Optimum pH is 8.8 for triacylglycerol lipase activity, 8.5 for phospholipase activity and 8 for galactolipase activity. The enzyme activities decrease in the pH 5-7 range corresponding to the physiological conditions occurring in the small intestine.</text>
    </phDependence>
</comment>
<comment type="pathway">
    <text evidence="16">Glycerolipid metabolism; triacylglycerol degradation.</text>
</comment>
<comment type="pathway">
    <text evidence="13">Glycolipid metabolism.</text>
</comment>
<comment type="interaction">
    <interactant intactId="EBI-21845366">
        <id>P54317</id>
    </interactant>
    <interactant intactId="EBI-997311">
        <id>Q96F86</id>
        <label>EDC3</label>
    </interactant>
    <organismsDiffer>false</organismsDiffer>
    <experiments>2</experiments>
</comment>
<comment type="subcellular location">
    <subcellularLocation>
        <location evidence="10 12">Secreted</location>
    </subcellularLocation>
    <subcellularLocation>
        <location evidence="2">Zymogen granule membrane</location>
        <topology evidence="2">Peripheral membrane protein</topology>
    </subcellularLocation>
    <subcellularLocation>
        <location evidence="2">Cell projection</location>
        <location evidence="2">Neuron projection</location>
    </subcellularLocation>
    <text evidence="2">Localizes to neurite tips in neuronal cells.</text>
</comment>
<comment type="tissue specificity">
    <text evidence="6">Pancreas.</text>
</comment>
<comment type="developmental stage">
    <text evidence="6">Expressed by 16 weeks in fetal pancreas.</text>
</comment>
<comment type="similarity">
    <text evidence="21">Belongs to the AB hydrolase superfamily. Lipase family.</text>
</comment>
<reference key="1">
    <citation type="journal article" date="1992" name="J. Biol. Chem.">
        <title>Two novel human pancreatic lipase related proteins, hPLRP1 and hPLRP2. Differences in colipase dependence and in lipase activity.</title>
        <authorList>
            <person name="Giller T."/>
            <person name="Buchwald P."/>
            <person name="Blum-Kaelin D."/>
            <person name="Hunziker W."/>
        </authorList>
    </citation>
    <scope>NUCLEOTIDE SEQUENCE [MRNA]</scope>
    <scope>VARIANT VAL-361</scope>
    <source>
        <tissue>Pancreas</tissue>
    </source>
</reference>
<reference key="2">
    <citation type="journal article" date="2004" name="Nat. Genet.">
        <title>Complete sequencing and characterization of 21,243 full-length human cDNAs.</title>
        <authorList>
            <person name="Ota T."/>
            <person name="Suzuki Y."/>
            <person name="Nishikawa T."/>
            <person name="Otsuki T."/>
            <person name="Sugiyama T."/>
            <person name="Irie R."/>
            <person name="Wakamatsu A."/>
            <person name="Hayashi K."/>
            <person name="Sato H."/>
            <person name="Nagai K."/>
            <person name="Kimura K."/>
            <person name="Makita H."/>
            <person name="Sekine M."/>
            <person name="Obayashi M."/>
            <person name="Nishi T."/>
            <person name="Shibahara T."/>
            <person name="Tanaka T."/>
            <person name="Ishii S."/>
            <person name="Yamamoto J."/>
            <person name="Saito K."/>
            <person name="Kawai Y."/>
            <person name="Isono Y."/>
            <person name="Nakamura Y."/>
            <person name="Nagahari K."/>
            <person name="Murakami K."/>
            <person name="Yasuda T."/>
            <person name="Iwayanagi T."/>
            <person name="Wagatsuma M."/>
            <person name="Shiratori A."/>
            <person name="Sudo H."/>
            <person name="Hosoiri T."/>
            <person name="Kaku Y."/>
            <person name="Kodaira H."/>
            <person name="Kondo H."/>
            <person name="Sugawara M."/>
            <person name="Takahashi M."/>
            <person name="Kanda K."/>
            <person name="Yokoi T."/>
            <person name="Furuya T."/>
            <person name="Kikkawa E."/>
            <person name="Omura Y."/>
            <person name="Abe K."/>
            <person name="Kamihara K."/>
            <person name="Katsuta N."/>
            <person name="Sato K."/>
            <person name="Tanikawa M."/>
            <person name="Yamazaki M."/>
            <person name="Ninomiya K."/>
            <person name="Ishibashi T."/>
            <person name="Yamashita H."/>
            <person name="Murakawa K."/>
            <person name="Fujimori K."/>
            <person name="Tanai H."/>
            <person name="Kimata M."/>
            <person name="Watanabe M."/>
            <person name="Hiraoka S."/>
            <person name="Chiba Y."/>
            <person name="Ishida S."/>
            <person name="Ono Y."/>
            <person name="Takiguchi S."/>
            <person name="Watanabe S."/>
            <person name="Yosida M."/>
            <person name="Hotuta T."/>
            <person name="Kusano J."/>
            <person name="Kanehori K."/>
            <person name="Takahashi-Fujii A."/>
            <person name="Hara H."/>
            <person name="Tanase T.-O."/>
            <person name="Nomura Y."/>
            <person name="Togiya S."/>
            <person name="Komai F."/>
            <person name="Hara R."/>
            <person name="Takeuchi K."/>
            <person name="Arita M."/>
            <person name="Imose N."/>
            <person name="Musashino K."/>
            <person name="Yuuki H."/>
            <person name="Oshima A."/>
            <person name="Sasaki N."/>
            <person name="Aotsuka S."/>
            <person name="Yoshikawa Y."/>
            <person name="Matsunawa H."/>
            <person name="Ichihara T."/>
            <person name="Shiohata N."/>
            <person name="Sano S."/>
            <person name="Moriya S."/>
            <person name="Momiyama H."/>
            <person name="Satoh N."/>
            <person name="Takami S."/>
            <person name="Terashima Y."/>
            <person name="Suzuki O."/>
            <person name="Nakagawa S."/>
            <person name="Senoh A."/>
            <person name="Mizoguchi H."/>
            <person name="Goto Y."/>
            <person name="Shimizu F."/>
            <person name="Wakebe H."/>
            <person name="Hishigaki H."/>
            <person name="Watanabe T."/>
            <person name="Sugiyama A."/>
            <person name="Takemoto M."/>
            <person name="Kawakami B."/>
            <person name="Yamazaki M."/>
            <person name="Watanabe K."/>
            <person name="Kumagai A."/>
            <person name="Itakura S."/>
            <person name="Fukuzumi Y."/>
            <person name="Fujimori Y."/>
            <person name="Komiyama M."/>
            <person name="Tashiro H."/>
            <person name="Tanigami A."/>
            <person name="Fujiwara T."/>
            <person name="Ono T."/>
            <person name="Yamada K."/>
            <person name="Fujii Y."/>
            <person name="Ozaki K."/>
            <person name="Hirao M."/>
            <person name="Ohmori Y."/>
            <person name="Kawabata A."/>
            <person name="Hikiji T."/>
            <person name="Kobatake N."/>
            <person name="Inagaki H."/>
            <person name="Ikema Y."/>
            <person name="Okamoto S."/>
            <person name="Okitani R."/>
            <person name="Kawakami T."/>
            <person name="Noguchi S."/>
            <person name="Itoh T."/>
            <person name="Shigeta K."/>
            <person name="Senba T."/>
            <person name="Matsumura K."/>
            <person name="Nakajima Y."/>
            <person name="Mizuno T."/>
            <person name="Morinaga M."/>
            <person name="Sasaki M."/>
            <person name="Togashi T."/>
            <person name="Oyama M."/>
            <person name="Hata H."/>
            <person name="Watanabe M."/>
            <person name="Komatsu T."/>
            <person name="Mizushima-Sugano J."/>
            <person name="Satoh T."/>
            <person name="Shirai Y."/>
            <person name="Takahashi Y."/>
            <person name="Nakagawa K."/>
            <person name="Okumura K."/>
            <person name="Nagase T."/>
            <person name="Nomura N."/>
            <person name="Kikuchi H."/>
            <person name="Masuho Y."/>
            <person name="Yamashita R."/>
            <person name="Nakai K."/>
            <person name="Yada T."/>
            <person name="Nakamura Y."/>
            <person name="Ohara O."/>
            <person name="Isogai T."/>
            <person name="Sugano S."/>
        </authorList>
    </citation>
    <scope>NUCLEOTIDE SEQUENCE [LARGE SCALE MRNA]</scope>
    <scope>VARIANT VAL-361</scope>
    <source>
        <tissue>Pancreas</tissue>
    </source>
</reference>
<reference key="3">
    <citation type="submission" date="2004-06" db="EMBL/GenBank/DDBJ databases">
        <title>Cloning of human full open reading frames in Gateway(TM) system entry vector (pDONR201).</title>
        <authorList>
            <person name="Ebert L."/>
            <person name="Schick M."/>
            <person name="Neubert P."/>
            <person name="Schatten R."/>
            <person name="Henze S."/>
            <person name="Korn B."/>
        </authorList>
    </citation>
    <scope>NUCLEOTIDE SEQUENCE [LARGE SCALE MRNA]</scope>
    <scope>VARIANT VAL-361</scope>
</reference>
<reference key="4">
    <citation type="journal article" date="2004" name="Nature">
        <title>The DNA sequence and comparative analysis of human chromosome 10.</title>
        <authorList>
            <person name="Deloukas P."/>
            <person name="Earthrowl M.E."/>
            <person name="Grafham D.V."/>
            <person name="Rubenfield M."/>
            <person name="French L."/>
            <person name="Steward C.A."/>
            <person name="Sims S.K."/>
            <person name="Jones M.C."/>
            <person name="Searle S."/>
            <person name="Scott C."/>
            <person name="Howe K."/>
            <person name="Hunt S.E."/>
            <person name="Andrews T.D."/>
            <person name="Gilbert J.G.R."/>
            <person name="Swarbreck D."/>
            <person name="Ashurst J.L."/>
            <person name="Taylor A."/>
            <person name="Battles J."/>
            <person name="Bird C.P."/>
            <person name="Ainscough R."/>
            <person name="Almeida J.P."/>
            <person name="Ashwell R.I.S."/>
            <person name="Ambrose K.D."/>
            <person name="Babbage A.K."/>
            <person name="Bagguley C.L."/>
            <person name="Bailey J."/>
            <person name="Banerjee R."/>
            <person name="Bates K."/>
            <person name="Beasley H."/>
            <person name="Bray-Allen S."/>
            <person name="Brown A.J."/>
            <person name="Brown J.Y."/>
            <person name="Burford D.C."/>
            <person name="Burrill W."/>
            <person name="Burton J."/>
            <person name="Cahill P."/>
            <person name="Camire D."/>
            <person name="Carter N.P."/>
            <person name="Chapman J.C."/>
            <person name="Clark S.Y."/>
            <person name="Clarke G."/>
            <person name="Clee C.M."/>
            <person name="Clegg S."/>
            <person name="Corby N."/>
            <person name="Coulson A."/>
            <person name="Dhami P."/>
            <person name="Dutta I."/>
            <person name="Dunn M."/>
            <person name="Faulkner L."/>
            <person name="Frankish A."/>
            <person name="Frankland J.A."/>
            <person name="Garner P."/>
            <person name="Garnett J."/>
            <person name="Gribble S."/>
            <person name="Griffiths C."/>
            <person name="Grocock R."/>
            <person name="Gustafson E."/>
            <person name="Hammond S."/>
            <person name="Harley J.L."/>
            <person name="Hart E."/>
            <person name="Heath P.D."/>
            <person name="Ho T.P."/>
            <person name="Hopkins B."/>
            <person name="Horne J."/>
            <person name="Howden P.J."/>
            <person name="Huckle E."/>
            <person name="Hynds C."/>
            <person name="Johnson C."/>
            <person name="Johnson D."/>
            <person name="Kana A."/>
            <person name="Kay M."/>
            <person name="Kimberley A.M."/>
            <person name="Kershaw J.K."/>
            <person name="Kokkinaki M."/>
            <person name="Laird G.K."/>
            <person name="Lawlor S."/>
            <person name="Lee H.M."/>
            <person name="Leongamornlert D.A."/>
            <person name="Laird G."/>
            <person name="Lloyd C."/>
            <person name="Lloyd D.M."/>
            <person name="Loveland J."/>
            <person name="Lovell J."/>
            <person name="McLaren S."/>
            <person name="McLay K.E."/>
            <person name="McMurray A."/>
            <person name="Mashreghi-Mohammadi M."/>
            <person name="Matthews L."/>
            <person name="Milne S."/>
            <person name="Nickerson T."/>
            <person name="Nguyen M."/>
            <person name="Overton-Larty E."/>
            <person name="Palmer S.A."/>
            <person name="Pearce A.V."/>
            <person name="Peck A.I."/>
            <person name="Pelan S."/>
            <person name="Phillimore B."/>
            <person name="Porter K."/>
            <person name="Rice C.M."/>
            <person name="Rogosin A."/>
            <person name="Ross M.T."/>
            <person name="Sarafidou T."/>
            <person name="Sehra H.K."/>
            <person name="Shownkeen R."/>
            <person name="Skuce C.D."/>
            <person name="Smith M."/>
            <person name="Standring L."/>
            <person name="Sycamore N."/>
            <person name="Tester J."/>
            <person name="Thorpe A."/>
            <person name="Torcasso W."/>
            <person name="Tracey A."/>
            <person name="Tromans A."/>
            <person name="Tsolas J."/>
            <person name="Wall M."/>
            <person name="Walsh J."/>
            <person name="Wang H."/>
            <person name="Weinstock K."/>
            <person name="West A.P."/>
            <person name="Willey D.L."/>
            <person name="Whitehead S.L."/>
            <person name="Wilming L."/>
            <person name="Wray P.W."/>
            <person name="Young L."/>
            <person name="Chen Y."/>
            <person name="Lovering R.C."/>
            <person name="Moschonas N.K."/>
            <person name="Siebert R."/>
            <person name="Fechtel K."/>
            <person name="Bentley D."/>
            <person name="Durbin R.M."/>
            <person name="Hubbard T."/>
            <person name="Doucette-Stamm L."/>
            <person name="Beck S."/>
            <person name="Smith D.R."/>
            <person name="Rogers J."/>
        </authorList>
    </citation>
    <scope>NUCLEOTIDE SEQUENCE [LARGE SCALE GENOMIC DNA]</scope>
</reference>
<reference key="5">
    <citation type="submission" date="2005-09" db="EMBL/GenBank/DDBJ databases">
        <authorList>
            <person name="Mural R.J."/>
            <person name="Istrail S."/>
            <person name="Sutton G.G."/>
            <person name="Florea L."/>
            <person name="Halpern A.L."/>
            <person name="Mobarry C.M."/>
            <person name="Lippert R."/>
            <person name="Walenz B."/>
            <person name="Shatkay H."/>
            <person name="Dew I."/>
            <person name="Miller J.R."/>
            <person name="Flanigan M.J."/>
            <person name="Edwards N.J."/>
            <person name="Bolanos R."/>
            <person name="Fasulo D."/>
            <person name="Halldorsson B.V."/>
            <person name="Hannenhalli S."/>
            <person name="Turner R."/>
            <person name="Yooseph S."/>
            <person name="Lu F."/>
            <person name="Nusskern D.R."/>
            <person name="Shue B.C."/>
            <person name="Zheng X.H."/>
            <person name="Zhong F."/>
            <person name="Delcher A.L."/>
            <person name="Huson D.H."/>
            <person name="Kravitz S.A."/>
            <person name="Mouchard L."/>
            <person name="Reinert K."/>
            <person name="Remington K.A."/>
            <person name="Clark A.G."/>
            <person name="Waterman M.S."/>
            <person name="Eichler E.E."/>
            <person name="Adams M.D."/>
            <person name="Hunkapiller M.W."/>
            <person name="Myers E.W."/>
            <person name="Venter J.C."/>
        </authorList>
    </citation>
    <scope>NUCLEOTIDE SEQUENCE [LARGE SCALE GENOMIC DNA]</scope>
    <scope>VARIANT VAL-361</scope>
</reference>
<reference key="6">
    <citation type="journal article" date="2004" name="Genome Res.">
        <title>The status, quality, and expansion of the NIH full-length cDNA project: the Mammalian Gene Collection (MGC).</title>
        <authorList>
            <consortium name="The MGC Project Team"/>
        </authorList>
    </citation>
    <scope>NUCLEOTIDE SEQUENCE [LARGE SCALE MRNA]</scope>
    <scope>VARIANT VAL-361</scope>
    <source>
        <tissue>Pancreas</tissue>
    </source>
</reference>
<reference key="7">
    <citation type="journal article" date="2000" name="Pediatr. Res.">
        <title>Discoordinate expression of pancreatic lipase and two related proteins in the human fetal pancreas.</title>
        <authorList>
            <person name="Yang Y."/>
            <person name="Sanchez D."/>
            <person name="Figarella C."/>
            <person name="Lowe M.E."/>
        </authorList>
    </citation>
    <scope>TISSUE SPECIFICITY</scope>
    <scope>DEVELOPMENTAL STAGE</scope>
</reference>
<reference key="8">
    <citation type="journal article" date="2004" name="Biochemistry">
        <title>Human pancreatic lipase-related protein 2 is a galactolipase.</title>
        <authorList>
            <person name="Sias B."/>
            <person name="Ferrato F."/>
            <person name="Grandval P."/>
            <person name="Lafont D."/>
            <person name="Boullanger P."/>
            <person name="De Caro A."/>
            <person name="Leboeuf B."/>
            <person name="Verger R."/>
            <person name="Carriere F."/>
        </authorList>
    </citation>
    <scope>FUNCTION</scope>
    <scope>CATALYTIC ACTIVITY</scope>
    <scope>ACTIVITY REGULATION</scope>
</reference>
<reference key="9">
    <citation type="journal article" date="2007" name="J. Lipid Res.">
        <title>Further biochemical characterization of human pancreatic lipase-related protein 2 expressed in yeast cells.</title>
        <authorList>
            <person name="Eydoux C."/>
            <person name="De Caro J."/>
            <person name="Ferrato F."/>
            <person name="Boullanger P."/>
            <person name="Lafont D."/>
            <person name="Laugier R."/>
            <person name="Carriere F."/>
            <person name="De Caro A."/>
        </authorList>
    </citation>
    <scope>FUNCTION</scope>
    <scope>CATALYTIC ACTIVITY</scope>
    <scope>BIOPHYSICOCHEMICAL PROPERTIES</scope>
    <scope>ACTIVITY REGULATION</scope>
</reference>
<reference key="10">
    <citation type="journal article" date="2009" name="J. Leukoc. Biol.">
        <title>Pancreatic lipase-related protein 2 (PLRP2) induction by IL-4 in cytotoxic T lymphocytes (CTLs) and reevaluation of the negative effects of its gene ablation on cytotoxicity.</title>
        <authorList>
            <person name="Alves B.N."/>
            <person name="Leong J."/>
            <person name="Tamang D.L."/>
            <person name="Elliott V."/>
            <person name="Edelnant J."/>
            <person name="Redelman D."/>
            <person name="Singer C.A."/>
            <person name="Kuhn A.R."/>
            <person name="Miller R."/>
            <person name="Lowe M.E."/>
            <person name="Hudig D."/>
        </authorList>
    </citation>
    <scope>FUNCTION</scope>
    <scope>CATALYTIC ACTIVITY</scope>
</reference>
<reference key="11">
    <citation type="journal article" date="2009" name="Mol. Nutr. Food Res.">
        <title>Individual and combined action of pancreatic lipase and pancreatic lipase-related proteins 1 and 2 on native versus homogenized milk fat globules.</title>
        <authorList>
            <person name="Berton A."/>
            <person name="Sebban-Kreuzer C."/>
            <person name="Rouvellac S."/>
            <person name="Lopez C."/>
            <person name="Crenon I."/>
        </authorList>
    </citation>
    <scope>FUNCTION</scope>
    <scope>SUBCELLULAR LOCATION</scope>
</reference>
<reference key="12">
    <citation type="journal article" date="2010" name="Biochim. Biophys. Acta">
        <title>Lipolysis of natural long chain and synthetic medium chain galactolipids by pancreatic lipase-related protein 2.</title>
        <authorList>
            <person name="Amara S."/>
            <person name="Barouh N."/>
            <person name="Lecomte J."/>
            <person name="Lafont D."/>
            <person name="Robert S."/>
            <person name="Villeneuve P."/>
            <person name="De Caro A."/>
            <person name="Carriere F."/>
        </authorList>
    </citation>
    <scope>FUNCTION</scope>
    <scope>CATALYTIC ACTIVITY</scope>
    <scope>ACTIVITY REGULATION</scope>
    <scope>PATHWAY</scope>
</reference>
<reference key="13">
    <citation type="journal article" date="2011" name="J. Biol. Chem.">
        <title>Pancreatic lipase-related protein-2 (PLRP2) can contribute to dietary fat digestion in human newborns.</title>
        <authorList>
            <person name="Xiao X."/>
            <person name="Mukherjee A."/>
            <person name="Ross L.E."/>
            <person name="Lowe M.E."/>
        </authorList>
    </citation>
    <scope>FUNCTION</scope>
    <scope>CATALYTIC ACTIVITY</scope>
    <scope>ACTIVITY REGULATION</scope>
    <scope>VARIANT 357-TRP--CYS-469 DEL</scope>
</reference>
<reference key="14">
    <citation type="journal article" date="2011" name="J. Lipid Res.">
        <title>BSSL and PLRP2: key enzymes for lipid digestion in the newborn examined using the Caco-2 cell line.</title>
        <authorList>
            <person name="Andersson E.L."/>
            <person name="Hernell O."/>
            <person name="Blaeckberg L."/>
            <person name="Faelt H."/>
            <person name="Lindquist S."/>
        </authorList>
    </citation>
    <scope>FUNCTION</scope>
    <scope>CATALYTIC ACTIVITY</scope>
    <scope>PATHWAY</scope>
</reference>
<reference key="15">
    <citation type="journal article" date="2013" name="Pediatr. Res.">
        <title>Pancreatic lipase-related protein 2 digests fats in human milk and formula in concert with gastric lipase and carboxyl ester lipase.</title>
        <authorList>
            <person name="Johnson K."/>
            <person name="Ross L."/>
            <person name="Miller R."/>
            <person name="Xiao X."/>
            <person name="Lowe M.E."/>
        </authorList>
    </citation>
    <scope>FUNCTION</scope>
    <scope>ACTIVITY REGULATION</scope>
</reference>
<reference key="16">
    <citation type="journal article" date="2015" name="J. Biol. Chem.">
        <title>The beta5-Loop and Lid Domain Contribute to the Substrate Specificity of Pancreatic Lipase-related Protein 2 (PNLIPRP2).</title>
        <authorList>
            <person name="Xiao X."/>
            <person name="Lowe M.E."/>
        </authorList>
    </citation>
    <scope>FUNCTION</scope>
    <scope>CATALYTIC ACTIVITY</scope>
    <scope>ACTIVITY REGULATION</scope>
    <scope>REGION</scope>
</reference>
<reference key="17">
    <citation type="journal article" date="2008" name="Biochemistry">
        <title>Structure of human pancreatic lipase-related protein 2 with the lid in an open conformation.</title>
        <authorList>
            <person name="Eydoux C."/>
            <person name="Spinelli S."/>
            <person name="Davis T.L."/>
            <person name="Walker J.R."/>
            <person name="Seitova A."/>
            <person name="Dhe-Paganon S."/>
            <person name="De Caro A."/>
            <person name="Cambillau C."/>
            <person name="Carriere F."/>
        </authorList>
    </citation>
    <scope>X-RAY CRYSTALLOGRAPHY (2.8 ANGSTROMS) OF 18-469 IN COMPLEX WITH CALCIUM IONS</scope>
    <scope>CATALYTIC ACTIVITY</scope>
    <scope>FUNCTION</scope>
    <scope>GLYCOSYLATION AT ASN-353</scope>
    <scope>MUTAGENESIS OF ASN-353</scope>
    <scope>SUBCELLULAR LOCATION</scope>
    <scope>IDENTIFICATION BY MASS SPECTROMETRY</scope>
    <scope>ACTIVE SITE</scope>
    <scope>DISULFIDE BONDS</scope>
</reference>
<reference key="18">
    <citation type="journal article" date="2010" name="Proc. Natl. Acad. Sci. U.S.A.">
        <title>Colloquium paper: human adaptations to diet, subsistence, and ecoregion are due to subtle shifts in allele frequency.</title>
        <authorList>
            <person name="Hancock A.M."/>
            <person name="Witonsky D.B."/>
            <person name="Ehler E."/>
            <person name="Alkorta-Aranburu G."/>
            <person name="Beall C."/>
            <person name="Gebremedhin A."/>
            <person name="Sukernik R."/>
            <person name="Utermann G."/>
            <person name="Pritchard J."/>
            <person name="Coop G."/>
            <person name="Di Rienzo A."/>
        </authorList>
    </citation>
    <scope>VARIANT 357-TRP--CYS-469 DEL</scope>
</reference>
<reference key="19">
    <citation type="journal article" date="2018" name="PLoS ONE">
        <title>The common truncation variant in pancreatic lipase related protein 2 (PNLIPRP2) is expressed poorly and does not alter risk for chronic pancreatitis.</title>
        <authorList>
            <person name="Nemeth B.C."/>
            <person name="Pesei Z.G."/>
            <person name="Hegyi E."/>
            <person name="Szuecs A."/>
            <person name="Szentesi A."/>
            <person name="Hegyi P."/>
            <person name="Lowe M.E."/>
            <person name="Sahin-Toth M."/>
        </authorList>
    </citation>
    <scope>VARIANT 357-TRP--CYS-469 DEL</scope>
</reference>
<sequence length="469" mass="51961">MLPPWTLGLLLLATVRGKEVCYGQLGCFSDEKPWAGTLQRPVKLLPWSPEDIDTRFLLYTNENPNNFQLITGTEPDTIEASNFQLDRKTRFIIHGFLDKAEDSWPSDMCKKMFEVEKVNCICVDWRHGSRAMYTQAVQNIRVVGAETAFLIQALSTQLGYSLEDVHVIGHSLGAHTAAEAGRRLGGRVGRITGLDPAGPCFQDEPEEVRLDPSDAVFVDVIHTDSSPIVPSLGFGMSQKVGHLDFFPNGGKEMPGCKKNVLSTITDIDGIWEGIGGFVSCNHLRSFEYYSSSVLNPDGFLGYPCASYDEFQESKCFPCPAEGCPKMGHYADQFKGKTSAVEQTFFLNTGESGNFTSWRYKISVTLSGKEKVNGYIRIALYGSNENSKQYEIFKGSLKPDASHTCAIDVDFNVGKIQKVKFLWNKRGINLSEPKLGASQITVQSGEDGTEYNFCSSDTVEENVLQSLYPC</sequence>
<gene>
    <name evidence="31" type="primary">PNLIPRP2</name>
    <name evidence="20" type="synonym">PLRP2</name>
</gene>
<name>LIPR2_HUMAN</name>
<protein>
    <recommendedName>
        <fullName evidence="31">Pancreatic lipase-related protein 2</fullName>
        <shortName evidence="22">PL-RP2</shortName>
    </recommendedName>
    <alternativeName>
        <fullName evidence="1">Cytotoxic T lymphocyte lipase</fullName>
    </alternativeName>
    <alternativeName>
        <fullName>Galactolipase</fullName>
        <ecNumber evidence="8 9 10 13">3.1.1.26</ecNumber>
    </alternativeName>
    <alternativeName>
        <fullName>Triacylglycerol lipase</fullName>
        <ecNumber evidence="8 9 10 11 15 16 18">3.1.1.3</ecNumber>
    </alternativeName>
</protein>
<proteinExistence type="evidence at protein level"/>
<keyword id="KW-0002">3D-structure</keyword>
<keyword id="KW-0106">Calcium</keyword>
<keyword id="KW-0966">Cell projection</keyword>
<keyword id="KW-0968">Cytoplasmic vesicle</keyword>
<keyword id="KW-1015">Disulfide bond</keyword>
<keyword id="KW-0325">Glycoprotein</keyword>
<keyword id="KW-0378">Hydrolase</keyword>
<keyword id="KW-0442">Lipid degradation</keyword>
<keyword id="KW-0443">Lipid metabolism</keyword>
<keyword id="KW-0472">Membrane</keyword>
<keyword id="KW-0479">Metal-binding</keyword>
<keyword id="KW-1267">Proteomics identification</keyword>
<keyword id="KW-1185">Reference proteome</keyword>
<keyword id="KW-0964">Secreted</keyword>
<keyword id="KW-0732">Signal</keyword>